<keyword id="KW-0520">NAD</keyword>
<keyword id="KW-0560">Oxidoreductase</keyword>
<comment type="catalytic activity">
    <reaction evidence="1">
        <text>L-glutamate 5-semialdehyde + NAD(+) + H2O = L-glutamate + NADH + 2 H(+)</text>
        <dbReference type="Rhea" id="RHEA:30235"/>
        <dbReference type="ChEBI" id="CHEBI:15377"/>
        <dbReference type="ChEBI" id="CHEBI:15378"/>
        <dbReference type="ChEBI" id="CHEBI:29985"/>
        <dbReference type="ChEBI" id="CHEBI:57540"/>
        <dbReference type="ChEBI" id="CHEBI:57945"/>
        <dbReference type="ChEBI" id="CHEBI:58066"/>
        <dbReference type="EC" id="1.2.1.88"/>
    </reaction>
</comment>
<comment type="pathway">
    <text evidence="1">Amino-acid degradation; L-proline degradation into L-glutamate; L-glutamate from L-proline: step 2/2.</text>
</comment>
<comment type="similarity">
    <text evidence="1">Belongs to the aldehyde dehydrogenase family. RocA subfamily.</text>
</comment>
<dbReference type="EC" id="1.2.1.88" evidence="1"/>
<dbReference type="EMBL" id="CP000485">
    <property type="protein sequence ID" value="ABK83702.1"/>
    <property type="molecule type" value="Genomic_DNA"/>
</dbReference>
<dbReference type="SMR" id="A0R909"/>
<dbReference type="KEGG" id="btl:BALH_0301"/>
<dbReference type="HOGENOM" id="CLU_005391_0_0_9"/>
<dbReference type="UniPathway" id="UPA00261">
    <property type="reaction ID" value="UER00374"/>
</dbReference>
<dbReference type="GO" id="GO:0009898">
    <property type="term" value="C:cytoplasmic side of plasma membrane"/>
    <property type="evidence" value="ECO:0007669"/>
    <property type="project" value="TreeGrafter"/>
</dbReference>
<dbReference type="GO" id="GO:0003842">
    <property type="term" value="F:1-pyrroline-5-carboxylate dehydrogenase activity"/>
    <property type="evidence" value="ECO:0007669"/>
    <property type="project" value="UniProtKB-UniRule"/>
</dbReference>
<dbReference type="GO" id="GO:0006537">
    <property type="term" value="P:glutamate biosynthetic process"/>
    <property type="evidence" value="ECO:0007669"/>
    <property type="project" value="UniProtKB-UniRule"/>
</dbReference>
<dbReference type="GO" id="GO:0010133">
    <property type="term" value="P:proline catabolic process to glutamate"/>
    <property type="evidence" value="ECO:0007669"/>
    <property type="project" value="UniProtKB-UniPathway"/>
</dbReference>
<dbReference type="CDD" id="cd07124">
    <property type="entry name" value="ALDH_PutA-P5CDH-RocA"/>
    <property type="match status" value="1"/>
</dbReference>
<dbReference type="FunFam" id="3.40.309.10:FF:000005">
    <property type="entry name" value="1-pyrroline-5-carboxylate dehydrogenase 1"/>
    <property type="match status" value="1"/>
</dbReference>
<dbReference type="FunFam" id="3.40.605.10:FF:000045">
    <property type="entry name" value="1-pyrroline-5-carboxylate dehydrogenase 1"/>
    <property type="match status" value="1"/>
</dbReference>
<dbReference type="Gene3D" id="3.40.605.10">
    <property type="entry name" value="Aldehyde Dehydrogenase, Chain A, domain 1"/>
    <property type="match status" value="1"/>
</dbReference>
<dbReference type="Gene3D" id="3.40.309.10">
    <property type="entry name" value="Aldehyde Dehydrogenase, Chain A, domain 2"/>
    <property type="match status" value="1"/>
</dbReference>
<dbReference type="HAMAP" id="MF_00733">
    <property type="entry name" value="RocA"/>
    <property type="match status" value="1"/>
</dbReference>
<dbReference type="InterPro" id="IPR016161">
    <property type="entry name" value="Ald_DH/histidinol_DH"/>
</dbReference>
<dbReference type="InterPro" id="IPR016163">
    <property type="entry name" value="Ald_DH_C"/>
</dbReference>
<dbReference type="InterPro" id="IPR016160">
    <property type="entry name" value="Ald_DH_CS_CYS"/>
</dbReference>
<dbReference type="InterPro" id="IPR029510">
    <property type="entry name" value="Ald_DH_CS_GLU"/>
</dbReference>
<dbReference type="InterPro" id="IPR016162">
    <property type="entry name" value="Ald_DH_N"/>
</dbReference>
<dbReference type="InterPro" id="IPR015590">
    <property type="entry name" value="Aldehyde_DH_dom"/>
</dbReference>
<dbReference type="InterPro" id="IPR050485">
    <property type="entry name" value="Proline_metab_enzyme"/>
</dbReference>
<dbReference type="InterPro" id="IPR005932">
    <property type="entry name" value="RocA"/>
</dbReference>
<dbReference type="InterPro" id="IPR047597">
    <property type="entry name" value="RocA_bacillales"/>
</dbReference>
<dbReference type="NCBIfam" id="TIGR01237">
    <property type="entry name" value="D1pyr5carbox2"/>
    <property type="match status" value="1"/>
</dbReference>
<dbReference type="NCBIfam" id="NF002852">
    <property type="entry name" value="PRK03137.1"/>
    <property type="match status" value="1"/>
</dbReference>
<dbReference type="PANTHER" id="PTHR42862">
    <property type="entry name" value="DELTA-1-PYRROLINE-5-CARBOXYLATE DEHYDROGENASE 1, ISOFORM A-RELATED"/>
    <property type="match status" value="1"/>
</dbReference>
<dbReference type="PANTHER" id="PTHR42862:SF1">
    <property type="entry name" value="DELTA-1-PYRROLINE-5-CARBOXYLATE DEHYDROGENASE 2, ISOFORM A-RELATED"/>
    <property type="match status" value="1"/>
</dbReference>
<dbReference type="Pfam" id="PF00171">
    <property type="entry name" value="Aldedh"/>
    <property type="match status" value="1"/>
</dbReference>
<dbReference type="SUPFAM" id="SSF53720">
    <property type="entry name" value="ALDH-like"/>
    <property type="match status" value="1"/>
</dbReference>
<dbReference type="PROSITE" id="PS00070">
    <property type="entry name" value="ALDEHYDE_DEHYDR_CYS"/>
    <property type="match status" value="1"/>
</dbReference>
<dbReference type="PROSITE" id="PS00687">
    <property type="entry name" value="ALDEHYDE_DEHYDR_GLU"/>
    <property type="match status" value="1"/>
</dbReference>
<accession>A0R909</accession>
<sequence length="515" mass="56225">MVVAYKHEPFTDFSVEANKLAFEEGLKKVESYLGQDYPLIIGGEKITTEDKIVSVNPANKEELVGRVSKASRELAEKAMQVADETFQTWRKSKPEMRADILFRAAAIVRRRKHEFSAILVKEAGKPWNEADADTAEAIDFMEYYGRQMLKLKDGIPVESRPIEYNRFSYIPLGVGVIISPWNFPFAIMAGMTTAALVSGNTVLLKPASTTPVVAAKFMEVLEEAGLPAGVVNFVPGNGSEVGDYLVDHPRTRFISFTGSRDVGIRIYERAAKVNPGQIWLKRVIAEMGGKDTIVVDKEADLELAAKSIVASAFGFSGQKCSACSRAVIHEDVYDHVLNRAVELTKELTVANPAVLGTNMGPVNDQAAFDKVMSYVAIGKEEGRILAGGEGDDSKGWFIQPTIVADVAEDARLMKEEIFGPVVAFCKAKDFDHALAIANNTEYGLTGAVISNNRDHIEKAREDFHVGNLYFNRGCTGAIVGYQPFGGFNMSGTDSKAGGPDYLALHMQAKTTSETL</sequence>
<protein>
    <recommendedName>
        <fullName evidence="1">1-pyrroline-5-carboxylate dehydrogenase</fullName>
        <shortName evidence="1">P5C dehydrogenase</shortName>
        <ecNumber evidence="1">1.2.1.88</ecNumber>
    </recommendedName>
    <alternativeName>
        <fullName evidence="1">L-glutamate gamma-semialdehyde dehydrogenase</fullName>
    </alternativeName>
</protein>
<proteinExistence type="inferred from homology"/>
<gene>
    <name evidence="1" type="primary">rocA</name>
    <name type="ordered locus">BALH_0301</name>
</gene>
<reference key="1">
    <citation type="journal article" date="2007" name="J. Bacteriol.">
        <title>The complete genome sequence of Bacillus thuringiensis Al Hakam.</title>
        <authorList>
            <person name="Challacombe J.F."/>
            <person name="Altherr M.R."/>
            <person name="Xie G."/>
            <person name="Bhotika S.S."/>
            <person name="Brown N."/>
            <person name="Bruce D."/>
            <person name="Campbell C.S."/>
            <person name="Campbell M.L."/>
            <person name="Chen J."/>
            <person name="Chertkov O."/>
            <person name="Cleland C."/>
            <person name="Dimitrijevic M."/>
            <person name="Doggett N.A."/>
            <person name="Fawcett J.J."/>
            <person name="Glavina T."/>
            <person name="Goodwin L.A."/>
            <person name="Green L.D."/>
            <person name="Han C.S."/>
            <person name="Hill K.K."/>
            <person name="Hitchcock P."/>
            <person name="Jackson P.J."/>
            <person name="Keim P."/>
            <person name="Kewalramani A.R."/>
            <person name="Longmire J."/>
            <person name="Lucas S."/>
            <person name="Malfatti S."/>
            <person name="Martinez D."/>
            <person name="McMurry K."/>
            <person name="Meincke L.J."/>
            <person name="Misra M."/>
            <person name="Moseman B.L."/>
            <person name="Mundt M."/>
            <person name="Munk A.C."/>
            <person name="Okinaka R.T."/>
            <person name="Parson-Quintana B."/>
            <person name="Reilly L.P."/>
            <person name="Richardson P."/>
            <person name="Robinson D.L."/>
            <person name="Saunders E."/>
            <person name="Tapia R."/>
            <person name="Tesmer J.G."/>
            <person name="Thayer N."/>
            <person name="Thompson L.S."/>
            <person name="Tice H."/>
            <person name="Ticknor L.O."/>
            <person name="Wills P.L."/>
            <person name="Gilna P."/>
            <person name="Brettin T.S."/>
        </authorList>
    </citation>
    <scope>NUCLEOTIDE SEQUENCE [LARGE SCALE GENOMIC DNA]</scope>
    <source>
        <strain>Al Hakam</strain>
    </source>
</reference>
<feature type="chain" id="PRO_1000045969" description="1-pyrroline-5-carboxylate dehydrogenase">
    <location>
        <begin position="1"/>
        <end position="515"/>
    </location>
</feature>
<feature type="active site" evidence="1">
    <location>
        <position position="286"/>
    </location>
</feature>
<feature type="active site" evidence="1">
    <location>
        <position position="320"/>
    </location>
</feature>
<organism>
    <name type="scientific">Bacillus thuringiensis (strain Al Hakam)</name>
    <dbReference type="NCBI Taxonomy" id="412694"/>
    <lineage>
        <taxon>Bacteria</taxon>
        <taxon>Bacillati</taxon>
        <taxon>Bacillota</taxon>
        <taxon>Bacilli</taxon>
        <taxon>Bacillales</taxon>
        <taxon>Bacillaceae</taxon>
        <taxon>Bacillus</taxon>
        <taxon>Bacillus cereus group</taxon>
    </lineage>
</organism>
<name>ROCA_BACAH</name>
<evidence type="ECO:0000255" key="1">
    <source>
        <dbReference type="HAMAP-Rule" id="MF_00733"/>
    </source>
</evidence>